<name>NIKR_METVS</name>
<feature type="chain" id="PRO_1000014076" description="Putative nickel-responsive regulator">
    <location>
        <begin position="1"/>
        <end position="141"/>
    </location>
</feature>
<feature type="binding site" evidence="1">
    <location>
        <position position="80"/>
    </location>
    <ligand>
        <name>Ni(2+)</name>
        <dbReference type="ChEBI" id="CHEBI:49786"/>
    </ligand>
</feature>
<feature type="binding site" evidence="1">
    <location>
        <position position="91"/>
    </location>
    <ligand>
        <name>Ni(2+)</name>
        <dbReference type="ChEBI" id="CHEBI:49786"/>
    </ligand>
</feature>
<feature type="binding site" evidence="1">
    <location>
        <position position="93"/>
    </location>
    <ligand>
        <name>Ni(2+)</name>
        <dbReference type="ChEBI" id="CHEBI:49786"/>
    </ligand>
</feature>
<feature type="binding site" evidence="1">
    <location>
        <position position="99"/>
    </location>
    <ligand>
        <name>Ni(2+)</name>
        <dbReference type="ChEBI" id="CHEBI:49786"/>
    </ligand>
</feature>
<accession>A6URH7</accession>
<dbReference type="EMBL" id="CP000742">
    <property type="protein sequence ID" value="ABR55099.1"/>
    <property type="molecule type" value="Genomic_DNA"/>
</dbReference>
<dbReference type="RefSeq" id="WP_012066014.1">
    <property type="nucleotide sequence ID" value="NC_009634.1"/>
</dbReference>
<dbReference type="SMR" id="A6URH7"/>
<dbReference type="STRING" id="406327.Mevan_1201"/>
<dbReference type="GeneID" id="5325569"/>
<dbReference type="KEGG" id="mvn:Mevan_1201"/>
<dbReference type="eggNOG" id="arCOG01008">
    <property type="taxonomic scope" value="Archaea"/>
</dbReference>
<dbReference type="HOGENOM" id="CLU_113319_1_2_2"/>
<dbReference type="OrthoDB" id="25654at2157"/>
<dbReference type="Proteomes" id="UP000001107">
    <property type="component" value="Chromosome"/>
</dbReference>
<dbReference type="GO" id="GO:0003677">
    <property type="term" value="F:DNA binding"/>
    <property type="evidence" value="ECO:0007669"/>
    <property type="project" value="UniProtKB-KW"/>
</dbReference>
<dbReference type="GO" id="GO:0003700">
    <property type="term" value="F:DNA-binding transcription factor activity"/>
    <property type="evidence" value="ECO:0007669"/>
    <property type="project" value="UniProtKB-UniRule"/>
</dbReference>
<dbReference type="GO" id="GO:0016151">
    <property type="term" value="F:nickel cation binding"/>
    <property type="evidence" value="ECO:0007669"/>
    <property type="project" value="UniProtKB-UniRule"/>
</dbReference>
<dbReference type="GO" id="GO:0010045">
    <property type="term" value="P:response to nickel cation"/>
    <property type="evidence" value="ECO:0007669"/>
    <property type="project" value="InterPro"/>
</dbReference>
<dbReference type="CDD" id="cd22231">
    <property type="entry name" value="RHH_NikR_HicB-like"/>
    <property type="match status" value="1"/>
</dbReference>
<dbReference type="Gene3D" id="3.30.70.1150">
    <property type="entry name" value="ACT-like. Chain A, domain 2"/>
    <property type="match status" value="1"/>
</dbReference>
<dbReference type="Gene3D" id="1.10.1220.10">
    <property type="entry name" value="Met repressor-like"/>
    <property type="match status" value="1"/>
</dbReference>
<dbReference type="HAMAP" id="MF_00476">
    <property type="entry name" value="NikR"/>
    <property type="match status" value="1"/>
</dbReference>
<dbReference type="InterPro" id="IPR027271">
    <property type="entry name" value="Acetolactate_synth/TF_NikR_C"/>
</dbReference>
<dbReference type="InterPro" id="IPR045865">
    <property type="entry name" value="ACT-like_dom_sf"/>
</dbReference>
<dbReference type="InterPro" id="IPR013321">
    <property type="entry name" value="Arc_rbn_hlx_hlx"/>
</dbReference>
<dbReference type="InterPro" id="IPR002145">
    <property type="entry name" value="CopG"/>
</dbReference>
<dbReference type="InterPro" id="IPR050192">
    <property type="entry name" value="CopG/NikR_regulator"/>
</dbReference>
<dbReference type="InterPro" id="IPR022988">
    <property type="entry name" value="Ni_resp_reg_NikR"/>
</dbReference>
<dbReference type="InterPro" id="IPR010985">
    <property type="entry name" value="Ribbon_hlx_hlx"/>
</dbReference>
<dbReference type="InterPro" id="IPR014864">
    <property type="entry name" value="TF_NikR_Ni-bd_C"/>
</dbReference>
<dbReference type="NCBIfam" id="NF001884">
    <property type="entry name" value="PRK00630.1"/>
    <property type="match status" value="1"/>
</dbReference>
<dbReference type="NCBIfam" id="NF002169">
    <property type="entry name" value="PRK01002.1"/>
    <property type="match status" value="1"/>
</dbReference>
<dbReference type="NCBIfam" id="NF002815">
    <property type="entry name" value="PRK02967.1"/>
    <property type="match status" value="1"/>
</dbReference>
<dbReference type="NCBIfam" id="NF003381">
    <property type="entry name" value="PRK04460.1"/>
    <property type="match status" value="1"/>
</dbReference>
<dbReference type="PANTHER" id="PTHR34719">
    <property type="entry name" value="NICKEL-RESPONSIVE REGULATOR"/>
    <property type="match status" value="1"/>
</dbReference>
<dbReference type="PANTHER" id="PTHR34719:SF2">
    <property type="entry name" value="NICKEL-RESPONSIVE REGULATOR"/>
    <property type="match status" value="1"/>
</dbReference>
<dbReference type="Pfam" id="PF08753">
    <property type="entry name" value="NikR_C"/>
    <property type="match status" value="1"/>
</dbReference>
<dbReference type="Pfam" id="PF01402">
    <property type="entry name" value="RHH_1"/>
    <property type="match status" value="1"/>
</dbReference>
<dbReference type="SUPFAM" id="SSF55021">
    <property type="entry name" value="ACT-like"/>
    <property type="match status" value="1"/>
</dbReference>
<dbReference type="SUPFAM" id="SSF47598">
    <property type="entry name" value="Ribbon-helix-helix"/>
    <property type="match status" value="1"/>
</dbReference>
<protein>
    <recommendedName>
        <fullName evidence="1">Putative nickel-responsive regulator</fullName>
    </recommendedName>
</protein>
<proteinExistence type="inferred from homology"/>
<comment type="function">
    <text evidence="1">Transcriptional regulator.</text>
</comment>
<comment type="cofactor">
    <cofactor evidence="1">
        <name>Ni(2+)</name>
        <dbReference type="ChEBI" id="CHEBI:49786"/>
    </cofactor>
    <text evidence="1">Binds 1 nickel ion per subunit.</text>
</comment>
<comment type="similarity">
    <text evidence="1">Belongs to the transcriptional regulatory CopG/NikR family.</text>
</comment>
<gene>
    <name type="ordered locus">Mevan_1201</name>
</gene>
<reference key="1">
    <citation type="submission" date="2007-06" db="EMBL/GenBank/DDBJ databases">
        <title>Complete sequence of Methanococcus vannielii SB.</title>
        <authorList>
            <consortium name="US DOE Joint Genome Institute"/>
            <person name="Copeland A."/>
            <person name="Lucas S."/>
            <person name="Lapidus A."/>
            <person name="Barry K."/>
            <person name="Glavina del Rio T."/>
            <person name="Dalin E."/>
            <person name="Tice H."/>
            <person name="Pitluck S."/>
            <person name="Chain P."/>
            <person name="Malfatti S."/>
            <person name="Shin M."/>
            <person name="Vergez L."/>
            <person name="Schmutz J."/>
            <person name="Larimer F."/>
            <person name="Land M."/>
            <person name="Hauser L."/>
            <person name="Kyrpides N."/>
            <person name="Anderson I."/>
            <person name="Sieprawska-Lupa M."/>
            <person name="Whitman W.B."/>
            <person name="Richardson P."/>
        </authorList>
    </citation>
    <scope>NUCLEOTIDE SEQUENCE [LARGE SCALE GENOMIC DNA]</scope>
    <source>
        <strain>ATCC 35089 / DSM 1224 / JCM 13029 / OCM 148 / SB</strain>
    </source>
</reference>
<organism>
    <name type="scientific">Methanococcus vannielii (strain ATCC 35089 / DSM 1224 / JCM 13029 / OCM 148 / SB)</name>
    <dbReference type="NCBI Taxonomy" id="406327"/>
    <lineage>
        <taxon>Archaea</taxon>
        <taxon>Methanobacteriati</taxon>
        <taxon>Methanobacteriota</taxon>
        <taxon>Methanomada group</taxon>
        <taxon>Methanococci</taxon>
        <taxon>Methanococcales</taxon>
        <taxon>Methanococcaceae</taxon>
        <taxon>Methanococcus</taxon>
    </lineage>
</organism>
<keyword id="KW-0238">DNA-binding</keyword>
<keyword id="KW-0479">Metal-binding</keyword>
<keyword id="KW-0533">Nickel</keyword>
<keyword id="KW-0804">Transcription</keyword>
<keyword id="KW-0805">Transcription regulation</keyword>
<sequence>MVDMDRISISLPTNLLAEFDDIIAERGYASRSEAIRDSIRDYLIKHKWIHSLEGSRAGTISIIYDHHSTDVMEKLTTIQHDYEKIIVATIHMHLDHDHCMEVVLVRGDASNIKELTDKLTSQKGVKQVKLTVMVPGGNIPQ</sequence>
<evidence type="ECO:0000255" key="1">
    <source>
        <dbReference type="HAMAP-Rule" id="MF_00476"/>
    </source>
</evidence>